<organism>
    <name type="scientific">Arabidopsis thaliana</name>
    <name type="common">Mouse-ear cress</name>
    <dbReference type="NCBI Taxonomy" id="3702"/>
    <lineage>
        <taxon>Eukaryota</taxon>
        <taxon>Viridiplantae</taxon>
        <taxon>Streptophyta</taxon>
        <taxon>Embryophyta</taxon>
        <taxon>Tracheophyta</taxon>
        <taxon>Spermatophyta</taxon>
        <taxon>Magnoliopsida</taxon>
        <taxon>eudicotyledons</taxon>
        <taxon>Gunneridae</taxon>
        <taxon>Pentapetalae</taxon>
        <taxon>rosids</taxon>
        <taxon>malvids</taxon>
        <taxon>Brassicales</taxon>
        <taxon>Brassicaceae</taxon>
        <taxon>Camelineae</taxon>
        <taxon>Arabidopsis</taxon>
    </lineage>
</organism>
<accession>O65921</accession>
<sequence length="344" mass="38162">MSKACWLVAAIIFTAATVVYGQQAPCFFVFGDSMSDNGNNNNLKSEAKVNFSPYGNDFPKGPTGRFSNGRTIPDIIGELSGFKDFIPPFAEASPEQAHTGMNYASGGSGLREETSEHLGDRISIRKQLQNHKTSITKANVPAERLQQCLYMINIGSNDYINNYFMSKPYNTKRRYTPKQYAYSLIIIYRSHLKNLHRLGARKVAVFGLSQIGCTPKIMKSHSDGKICSREVNEAVKIFNKNLDDLVMDFNKKVRGAKFTYVDLFSGGDPQAFIFLGFKVGGKSCCTVNPGEELCVPNQPVCANRTEYVFWDDLHSTEATNMVVAKGSFDGIISKPYSIAQLAKE</sequence>
<name>GDL35_ARATH</name>
<gene>
    <name type="ordered locus">At2g19010</name>
    <name type="ORF">F19F24.4</name>
    <name type="ORF">T20K24.2</name>
</gene>
<evidence type="ECO:0000250" key="1"/>
<evidence type="ECO:0000255" key="2"/>
<evidence type="ECO:0000305" key="3"/>
<keyword id="KW-0325">Glycoprotein</keyword>
<keyword id="KW-0378">Hydrolase</keyword>
<keyword id="KW-0442">Lipid degradation</keyword>
<keyword id="KW-0443">Lipid metabolism</keyword>
<keyword id="KW-1185">Reference proteome</keyword>
<keyword id="KW-0964">Secreted</keyword>
<keyword id="KW-0732">Signal</keyword>
<comment type="subcellular location">
    <subcellularLocation>
        <location evidence="3">Secreted</location>
    </subcellularLocation>
</comment>
<comment type="similarity">
    <text evidence="3">Belongs to the 'GDSL' lipolytic enzyme family.</text>
</comment>
<proteinExistence type="evidence at transcript level"/>
<reference key="1">
    <citation type="journal article" date="1999" name="Nature">
        <title>Sequence and analysis of chromosome 2 of the plant Arabidopsis thaliana.</title>
        <authorList>
            <person name="Lin X."/>
            <person name="Kaul S."/>
            <person name="Rounsley S.D."/>
            <person name="Shea T.P."/>
            <person name="Benito M.-I."/>
            <person name="Town C.D."/>
            <person name="Fujii C.Y."/>
            <person name="Mason T.M."/>
            <person name="Bowman C.L."/>
            <person name="Barnstead M.E."/>
            <person name="Feldblyum T.V."/>
            <person name="Buell C.R."/>
            <person name="Ketchum K.A."/>
            <person name="Lee J.J."/>
            <person name="Ronning C.M."/>
            <person name="Koo H.L."/>
            <person name="Moffat K.S."/>
            <person name="Cronin L.A."/>
            <person name="Shen M."/>
            <person name="Pai G."/>
            <person name="Van Aken S."/>
            <person name="Umayam L."/>
            <person name="Tallon L.J."/>
            <person name="Gill J.E."/>
            <person name="Adams M.D."/>
            <person name="Carrera A.J."/>
            <person name="Creasy T.H."/>
            <person name="Goodman H.M."/>
            <person name="Somerville C.R."/>
            <person name="Copenhaver G.P."/>
            <person name="Preuss D."/>
            <person name="Nierman W.C."/>
            <person name="White O."/>
            <person name="Eisen J.A."/>
            <person name="Salzberg S.L."/>
            <person name="Fraser C.M."/>
            <person name="Venter J.C."/>
        </authorList>
    </citation>
    <scope>NUCLEOTIDE SEQUENCE [LARGE SCALE GENOMIC DNA]</scope>
    <source>
        <strain>cv. Columbia</strain>
    </source>
</reference>
<reference key="2">
    <citation type="journal article" date="2017" name="Plant J.">
        <title>Araport11: a complete reannotation of the Arabidopsis thaliana reference genome.</title>
        <authorList>
            <person name="Cheng C.Y."/>
            <person name="Krishnakumar V."/>
            <person name="Chan A.P."/>
            <person name="Thibaud-Nissen F."/>
            <person name="Schobel S."/>
            <person name="Town C.D."/>
        </authorList>
    </citation>
    <scope>GENOME REANNOTATION</scope>
    <source>
        <strain>cv. Columbia</strain>
    </source>
</reference>
<reference key="3">
    <citation type="journal article" date="2006" name="Plant Biotechnol. J.">
        <title>Simultaneous high-throughput recombinational cloning of open reading frames in closed and open configurations.</title>
        <authorList>
            <person name="Underwood B.A."/>
            <person name="Vanderhaeghen R."/>
            <person name="Whitford R."/>
            <person name="Town C.D."/>
            <person name="Hilson P."/>
        </authorList>
    </citation>
    <scope>NUCLEOTIDE SEQUENCE [LARGE SCALE MRNA]</scope>
    <source>
        <strain>cv. Columbia</strain>
    </source>
</reference>
<reference key="4">
    <citation type="journal article" date="2004" name="Prog. Lipid Res.">
        <title>GDSL family of serine esterases/lipases.</title>
        <authorList>
            <person name="Akoh C.C."/>
            <person name="Lee G.-C."/>
            <person name="Liaw Y.-C."/>
            <person name="Huang T.-H."/>
            <person name="Shaw J.-F."/>
        </authorList>
    </citation>
    <scope>REVIEW</scope>
</reference>
<reference key="5">
    <citation type="journal article" date="2008" name="Pak. J. Biol. Sci.">
        <title>Sequence analysis of GDSL lipase gene family in Arabidopsis thaliana.</title>
        <authorList>
            <person name="Ling H."/>
        </authorList>
    </citation>
    <scope>GENE FAMILY</scope>
</reference>
<feature type="signal peptide" evidence="2">
    <location>
        <begin position="1"/>
        <end position="21"/>
    </location>
</feature>
<feature type="chain" id="PRO_0000367376" description="GDSL esterase/lipase At2g19010">
    <location>
        <begin position="22"/>
        <end position="344"/>
    </location>
</feature>
<feature type="active site" description="Nucleophile" evidence="1">
    <location>
        <position position="33"/>
    </location>
</feature>
<feature type="active site" evidence="1">
    <location>
        <position position="311"/>
    </location>
</feature>
<feature type="active site" evidence="1">
    <location>
        <position position="314"/>
    </location>
</feature>
<feature type="glycosylation site" description="N-linked (GlcNAc...) asparagine" evidence="2">
    <location>
        <position position="303"/>
    </location>
</feature>
<dbReference type="EC" id="3.1.1.-"/>
<dbReference type="EMBL" id="AC002392">
    <property type="protein sequence ID" value="AAD12019.1"/>
    <property type="molecule type" value="Genomic_DNA"/>
</dbReference>
<dbReference type="EMBL" id="AC003673">
    <property type="protein sequence ID" value="AAM14888.1"/>
    <property type="molecule type" value="Genomic_DNA"/>
</dbReference>
<dbReference type="EMBL" id="CP002685">
    <property type="status" value="NOT_ANNOTATED_CDS"/>
    <property type="molecule type" value="Genomic_DNA"/>
</dbReference>
<dbReference type="EMBL" id="DQ056535">
    <property type="protein sequence ID" value="AAY78687.1"/>
    <property type="molecule type" value="mRNA"/>
</dbReference>
<dbReference type="PIR" id="T01629">
    <property type="entry name" value="T01629"/>
</dbReference>
<dbReference type="SMR" id="O65921"/>
<dbReference type="FunCoup" id="O65921">
    <property type="interactions" value="94"/>
</dbReference>
<dbReference type="STRING" id="3702.O65921"/>
<dbReference type="GlyGen" id="O65921">
    <property type="glycosylation" value="1 site"/>
</dbReference>
<dbReference type="PaxDb" id="3702-AT2G19010.1"/>
<dbReference type="ProteomicsDB" id="247090"/>
<dbReference type="Araport" id="AT2G19010"/>
<dbReference type="TAIR" id="AT2G19010"/>
<dbReference type="eggNOG" id="ENOG502SIKN">
    <property type="taxonomic scope" value="Eukaryota"/>
</dbReference>
<dbReference type="HOGENOM" id="CLU_015101_0_0_1"/>
<dbReference type="InParanoid" id="O65921"/>
<dbReference type="PhylomeDB" id="O65921"/>
<dbReference type="PRO" id="PR:O65921"/>
<dbReference type="Proteomes" id="UP000006548">
    <property type="component" value="Chromosome 2"/>
</dbReference>
<dbReference type="ExpressionAtlas" id="O65921">
    <property type="expression patterns" value="baseline and differential"/>
</dbReference>
<dbReference type="GO" id="GO:0005576">
    <property type="term" value="C:extracellular region"/>
    <property type="evidence" value="ECO:0007669"/>
    <property type="project" value="UniProtKB-SubCell"/>
</dbReference>
<dbReference type="GO" id="GO:0016788">
    <property type="term" value="F:hydrolase activity, acting on ester bonds"/>
    <property type="evidence" value="ECO:0007669"/>
    <property type="project" value="InterPro"/>
</dbReference>
<dbReference type="GO" id="GO:0016042">
    <property type="term" value="P:lipid catabolic process"/>
    <property type="evidence" value="ECO:0007669"/>
    <property type="project" value="UniProtKB-KW"/>
</dbReference>
<dbReference type="CDD" id="cd01837">
    <property type="entry name" value="SGNH_plant_lipase_like"/>
    <property type="match status" value="1"/>
</dbReference>
<dbReference type="Gene3D" id="3.40.50.1110">
    <property type="entry name" value="SGNH hydrolase"/>
    <property type="match status" value="1"/>
</dbReference>
<dbReference type="InterPro" id="IPR001087">
    <property type="entry name" value="GDSL"/>
</dbReference>
<dbReference type="InterPro" id="IPR051238">
    <property type="entry name" value="GDSL_esterase/lipase"/>
</dbReference>
<dbReference type="InterPro" id="IPR036514">
    <property type="entry name" value="SGNH_hydro_sf"/>
</dbReference>
<dbReference type="InterPro" id="IPR035669">
    <property type="entry name" value="SGNH_plant_lipase-like"/>
</dbReference>
<dbReference type="PANTHER" id="PTHR45650">
    <property type="entry name" value="GDSL-LIKE LIPASE/ACYLHYDROLASE-RELATED"/>
    <property type="match status" value="1"/>
</dbReference>
<dbReference type="PANTHER" id="PTHR45650:SF9">
    <property type="entry name" value="SGNH HYDROLASE-TYPE ESTERASE DOMAIN-CONTAINING PROTEIN"/>
    <property type="match status" value="1"/>
</dbReference>
<dbReference type="Pfam" id="PF00657">
    <property type="entry name" value="Lipase_GDSL"/>
    <property type="match status" value="1"/>
</dbReference>
<dbReference type="SUPFAM" id="SSF52266">
    <property type="entry name" value="SGNH hydrolase"/>
    <property type="match status" value="1"/>
</dbReference>
<protein>
    <recommendedName>
        <fullName>GDSL esterase/lipase At2g19010</fullName>
        <ecNumber>3.1.1.-</ecNumber>
    </recommendedName>
    <alternativeName>
        <fullName>Extracellular lipase At2g19010</fullName>
    </alternativeName>
</protein>